<name>ATPF_STRAW</name>
<comment type="function">
    <text evidence="1">F(1)F(0) ATP synthase produces ATP from ADP in the presence of a proton or sodium gradient. F-type ATPases consist of two structural domains, F(1) containing the extramembraneous catalytic core and F(0) containing the membrane proton channel, linked together by a central stalk and a peripheral stalk. During catalysis, ATP synthesis in the catalytic domain of F(1) is coupled via a rotary mechanism of the central stalk subunits to proton translocation.</text>
</comment>
<comment type="function">
    <text evidence="1">Component of the F(0) channel, it forms part of the peripheral stalk, linking F(1) to F(0).</text>
</comment>
<comment type="subunit">
    <text evidence="1">F-type ATPases have 2 components, F(1) - the catalytic core - and F(0) - the membrane proton channel. F(1) has five subunits: alpha(3), beta(3), gamma(1), delta(1), epsilon(1). F(0) has three main subunits: a(1), b(2) and c(10-14). The alpha and beta chains form an alternating ring which encloses part of the gamma chain. F(1) is attached to F(0) by a central stalk formed by the gamma and epsilon chains, while a peripheral stalk is formed by the delta and b chains.</text>
</comment>
<comment type="subcellular location">
    <subcellularLocation>
        <location evidence="1">Cell membrane</location>
        <topology evidence="1">Single-pass membrane protein</topology>
    </subcellularLocation>
</comment>
<comment type="similarity">
    <text evidence="1">Belongs to the ATPase B chain family.</text>
</comment>
<organism>
    <name type="scientific">Streptomyces avermitilis (strain ATCC 31267 / DSM 46492 / JCM 5070 / NBRC 14893 / NCIMB 12804 / NRRL 8165 / MA-4680)</name>
    <dbReference type="NCBI Taxonomy" id="227882"/>
    <lineage>
        <taxon>Bacteria</taxon>
        <taxon>Bacillati</taxon>
        <taxon>Actinomycetota</taxon>
        <taxon>Actinomycetes</taxon>
        <taxon>Kitasatosporales</taxon>
        <taxon>Streptomycetaceae</taxon>
        <taxon>Streptomyces</taxon>
    </lineage>
</organism>
<evidence type="ECO:0000255" key="1">
    <source>
        <dbReference type="HAMAP-Rule" id="MF_01398"/>
    </source>
</evidence>
<reference key="1">
    <citation type="journal article" date="2003" name="Nat. Biotechnol.">
        <title>Complete genome sequence and comparative analysis of the industrial microorganism Streptomyces avermitilis.</title>
        <authorList>
            <person name="Ikeda H."/>
            <person name="Ishikawa J."/>
            <person name="Hanamoto A."/>
            <person name="Shinose M."/>
            <person name="Kikuchi H."/>
            <person name="Shiba T."/>
            <person name="Sakaki Y."/>
            <person name="Hattori M."/>
            <person name="Omura S."/>
        </authorList>
    </citation>
    <scope>NUCLEOTIDE SEQUENCE [LARGE SCALE GENOMIC DNA]</scope>
    <source>
        <strain>ATCC 31267 / DSM 46492 / JCM 5070 / NBRC 14893 / NCIMB 12804 / NRRL 8165 / MA-4680</strain>
    </source>
</reference>
<reference key="2">
    <citation type="journal article" date="2001" name="Proc. Natl. Acad. Sci. U.S.A.">
        <title>Genome sequence of an industrial microorganism Streptomyces avermitilis: deducing the ability of producing secondary metabolites.</title>
        <authorList>
            <person name="Omura S."/>
            <person name="Ikeda H."/>
            <person name="Ishikawa J."/>
            <person name="Hanamoto A."/>
            <person name="Takahashi C."/>
            <person name="Shinose M."/>
            <person name="Takahashi Y."/>
            <person name="Horikawa H."/>
            <person name="Nakazawa H."/>
            <person name="Osonoe T."/>
            <person name="Kikuchi H."/>
            <person name="Shiba T."/>
            <person name="Sakaki Y."/>
            <person name="Hattori M."/>
        </authorList>
    </citation>
    <scope>NUCLEOTIDE SEQUENCE [LARGE SCALE GENOMIC DNA]</scope>
    <source>
        <strain>ATCC 31267 / DSM 46492 / JCM 5070 / NBRC 14893 / NCIMB 12804 / NRRL 8165 / MA-4680</strain>
    </source>
</reference>
<dbReference type="EMBL" id="BA000030">
    <property type="protein sequence ID" value="BAC70596.2"/>
    <property type="molecule type" value="Genomic_DNA"/>
</dbReference>
<dbReference type="RefSeq" id="WP_037651554.1">
    <property type="nucleotide sequence ID" value="NZ_JZJK01000041.1"/>
</dbReference>
<dbReference type="SMR" id="Q82J80"/>
<dbReference type="GeneID" id="41539971"/>
<dbReference type="KEGG" id="sma:SAVERM_2885"/>
<dbReference type="eggNOG" id="COG0711">
    <property type="taxonomic scope" value="Bacteria"/>
</dbReference>
<dbReference type="HOGENOM" id="CLU_079215_5_2_11"/>
<dbReference type="OrthoDB" id="5243563at2"/>
<dbReference type="Proteomes" id="UP000000428">
    <property type="component" value="Chromosome"/>
</dbReference>
<dbReference type="GO" id="GO:0005886">
    <property type="term" value="C:plasma membrane"/>
    <property type="evidence" value="ECO:0007669"/>
    <property type="project" value="UniProtKB-SubCell"/>
</dbReference>
<dbReference type="GO" id="GO:0045259">
    <property type="term" value="C:proton-transporting ATP synthase complex"/>
    <property type="evidence" value="ECO:0007669"/>
    <property type="project" value="UniProtKB-KW"/>
</dbReference>
<dbReference type="GO" id="GO:0046933">
    <property type="term" value="F:proton-transporting ATP synthase activity, rotational mechanism"/>
    <property type="evidence" value="ECO:0007669"/>
    <property type="project" value="UniProtKB-UniRule"/>
</dbReference>
<dbReference type="GO" id="GO:0046961">
    <property type="term" value="F:proton-transporting ATPase activity, rotational mechanism"/>
    <property type="evidence" value="ECO:0007669"/>
    <property type="project" value="TreeGrafter"/>
</dbReference>
<dbReference type="CDD" id="cd06503">
    <property type="entry name" value="ATP-synt_Fo_b"/>
    <property type="match status" value="1"/>
</dbReference>
<dbReference type="FunFam" id="1.20.5.620:FF:000002">
    <property type="entry name" value="ATP synthase subunit b"/>
    <property type="match status" value="1"/>
</dbReference>
<dbReference type="Gene3D" id="1.20.5.620">
    <property type="entry name" value="F1F0 ATP synthase subunit B, membrane domain"/>
    <property type="match status" value="1"/>
</dbReference>
<dbReference type="HAMAP" id="MF_01398">
    <property type="entry name" value="ATP_synth_b_bprime"/>
    <property type="match status" value="1"/>
</dbReference>
<dbReference type="InterPro" id="IPR028987">
    <property type="entry name" value="ATP_synth_B-like_membr_sf"/>
</dbReference>
<dbReference type="InterPro" id="IPR002146">
    <property type="entry name" value="ATP_synth_b/b'su_bac/chlpt"/>
</dbReference>
<dbReference type="InterPro" id="IPR005864">
    <property type="entry name" value="ATP_synth_F0_bsu_bac"/>
</dbReference>
<dbReference type="InterPro" id="IPR050059">
    <property type="entry name" value="ATP_synthase_B_chain"/>
</dbReference>
<dbReference type="NCBIfam" id="TIGR01144">
    <property type="entry name" value="ATP_synt_b"/>
    <property type="match status" value="1"/>
</dbReference>
<dbReference type="NCBIfam" id="NF004412">
    <property type="entry name" value="PRK05759.1-3"/>
    <property type="match status" value="1"/>
</dbReference>
<dbReference type="PANTHER" id="PTHR33445:SF1">
    <property type="entry name" value="ATP SYNTHASE SUBUNIT B"/>
    <property type="match status" value="1"/>
</dbReference>
<dbReference type="PANTHER" id="PTHR33445">
    <property type="entry name" value="ATP SYNTHASE SUBUNIT B', CHLOROPLASTIC"/>
    <property type="match status" value="1"/>
</dbReference>
<dbReference type="Pfam" id="PF00430">
    <property type="entry name" value="ATP-synt_B"/>
    <property type="match status" value="1"/>
</dbReference>
<dbReference type="SUPFAM" id="SSF81573">
    <property type="entry name" value="F1F0 ATP synthase subunit B, membrane domain"/>
    <property type="match status" value="1"/>
</dbReference>
<keyword id="KW-0066">ATP synthesis</keyword>
<keyword id="KW-1003">Cell membrane</keyword>
<keyword id="KW-0138">CF(0)</keyword>
<keyword id="KW-0375">Hydrogen ion transport</keyword>
<keyword id="KW-0406">Ion transport</keyword>
<keyword id="KW-0472">Membrane</keyword>
<keyword id="KW-1185">Reference proteome</keyword>
<keyword id="KW-0812">Transmembrane</keyword>
<keyword id="KW-1133">Transmembrane helix</keyword>
<keyword id="KW-0813">Transport</keyword>
<gene>
    <name evidence="1" type="primary">atpF</name>
    <name type="ordered locus">SAV_2885</name>
</gene>
<protein>
    <recommendedName>
        <fullName evidence="1">ATP synthase subunit b</fullName>
    </recommendedName>
    <alternativeName>
        <fullName evidence="1">ATP synthase F(0) sector subunit b</fullName>
    </alternativeName>
    <alternativeName>
        <fullName evidence="1">ATPase subunit I</fullName>
    </alternativeName>
    <alternativeName>
        <fullName evidence="1">F-type ATPase subunit b</fullName>
        <shortName evidence="1">F-ATPase subunit b</shortName>
    </alternativeName>
</protein>
<accession>Q82J80</accession>
<proteinExistence type="inferred from homology"/>
<sequence length="180" mass="19782">MILVQLAAEEAQNPLIPEVPELVIGLLAFAIVFFVLGKKLLPNINKVLEERRAAIEGGIEEAEAMKVEAQSVLEQYKAQLAEARHEAARLRQEAQEQGATLITEMRAEGQRQREEIIAAGHAQLEADRKAAAQALRQDVGTLATDLAGKLVGESLEDHARQSRVIDRFLDGLEEKAEATR</sequence>
<feature type="chain" id="PRO_0000368817" description="ATP synthase subunit b">
    <location>
        <begin position="1"/>
        <end position="180"/>
    </location>
</feature>
<feature type="transmembrane region" description="Helical" evidence="1">
    <location>
        <begin position="15"/>
        <end position="35"/>
    </location>
</feature>